<protein>
    <recommendedName>
        <fullName evidence="1">DNA-directed RNA polymerase subunit omega</fullName>
        <shortName evidence="1">RNAP omega subunit</shortName>
        <ecNumber evidence="1">2.7.7.6</ecNumber>
    </recommendedName>
    <alternativeName>
        <fullName evidence="1">RNA polymerase omega subunit</fullName>
    </alternativeName>
    <alternativeName>
        <fullName evidence="1">Transcriptase subunit omega</fullName>
    </alternativeName>
</protein>
<sequence>MITSGVEPKDLAKRGESLIRQSSNRYLTTVRIAFRAKQRRFDDFDGLLEESSVKPVQRAIVELSDEQDQPDLLPG</sequence>
<evidence type="ECO:0000255" key="1">
    <source>
        <dbReference type="HAMAP-Rule" id="MF_00366"/>
    </source>
</evidence>
<name>RPOZ_PROMM</name>
<gene>
    <name evidence="1" type="primary">rpoZ</name>
    <name type="ordered locus">PMT_1442</name>
</gene>
<reference key="1">
    <citation type="journal article" date="2003" name="Nature">
        <title>Genome divergence in two Prochlorococcus ecotypes reflects oceanic niche differentiation.</title>
        <authorList>
            <person name="Rocap G."/>
            <person name="Larimer F.W."/>
            <person name="Lamerdin J.E."/>
            <person name="Malfatti S."/>
            <person name="Chain P."/>
            <person name="Ahlgren N.A."/>
            <person name="Arellano A."/>
            <person name="Coleman M."/>
            <person name="Hauser L."/>
            <person name="Hess W.R."/>
            <person name="Johnson Z.I."/>
            <person name="Land M.L."/>
            <person name="Lindell D."/>
            <person name="Post A.F."/>
            <person name="Regala W."/>
            <person name="Shah M."/>
            <person name="Shaw S.L."/>
            <person name="Steglich C."/>
            <person name="Sullivan M.B."/>
            <person name="Ting C.S."/>
            <person name="Tolonen A."/>
            <person name="Webb E.A."/>
            <person name="Zinser E.R."/>
            <person name="Chisholm S.W."/>
        </authorList>
    </citation>
    <scope>NUCLEOTIDE SEQUENCE [LARGE SCALE GENOMIC DNA]</scope>
    <source>
        <strain>MIT 9313</strain>
    </source>
</reference>
<keyword id="KW-0240">DNA-directed RNA polymerase</keyword>
<keyword id="KW-0548">Nucleotidyltransferase</keyword>
<keyword id="KW-1185">Reference proteome</keyword>
<keyword id="KW-0804">Transcription</keyword>
<keyword id="KW-0808">Transferase</keyword>
<organism>
    <name type="scientific">Prochlorococcus marinus (strain MIT 9313)</name>
    <dbReference type="NCBI Taxonomy" id="74547"/>
    <lineage>
        <taxon>Bacteria</taxon>
        <taxon>Bacillati</taxon>
        <taxon>Cyanobacteriota</taxon>
        <taxon>Cyanophyceae</taxon>
        <taxon>Synechococcales</taxon>
        <taxon>Prochlorococcaceae</taxon>
        <taxon>Prochlorococcus</taxon>
    </lineage>
</organism>
<feature type="chain" id="PRO_0000128961" description="DNA-directed RNA polymerase subunit omega">
    <location>
        <begin position="1"/>
        <end position="75"/>
    </location>
</feature>
<comment type="function">
    <text evidence="1">Promotes RNA polymerase assembly. Latches the N- and C-terminal regions of the beta' subunit thereby facilitating its interaction with the beta and alpha subunits.</text>
</comment>
<comment type="catalytic activity">
    <reaction evidence="1">
        <text>RNA(n) + a ribonucleoside 5'-triphosphate = RNA(n+1) + diphosphate</text>
        <dbReference type="Rhea" id="RHEA:21248"/>
        <dbReference type="Rhea" id="RHEA-COMP:14527"/>
        <dbReference type="Rhea" id="RHEA-COMP:17342"/>
        <dbReference type="ChEBI" id="CHEBI:33019"/>
        <dbReference type="ChEBI" id="CHEBI:61557"/>
        <dbReference type="ChEBI" id="CHEBI:140395"/>
        <dbReference type="EC" id="2.7.7.6"/>
    </reaction>
</comment>
<comment type="subunit">
    <text evidence="1">In cyanobacteria the RNAP catalytic core is composed of 2 alpha, 1 beta, 1 beta', 1 gamma and 1 omega subunit. When a sigma factor is associated with the core the holoenzyme is formed, which can initiate transcription.</text>
</comment>
<comment type="similarity">
    <text evidence="1">Belongs to the RNA polymerase subunit omega family.</text>
</comment>
<proteinExistence type="inferred from homology"/>
<dbReference type="EC" id="2.7.7.6" evidence="1"/>
<dbReference type="EMBL" id="BX548175">
    <property type="protein sequence ID" value="CAE21617.1"/>
    <property type="molecule type" value="Genomic_DNA"/>
</dbReference>
<dbReference type="RefSeq" id="WP_011130810.1">
    <property type="nucleotide sequence ID" value="NC_005071.1"/>
</dbReference>
<dbReference type="SMR" id="Q7V5U8"/>
<dbReference type="KEGG" id="pmt:PMT_1442"/>
<dbReference type="eggNOG" id="ENOG5032RMS">
    <property type="taxonomic scope" value="Bacteria"/>
</dbReference>
<dbReference type="HOGENOM" id="CLU_175526_0_0_3"/>
<dbReference type="OrthoDB" id="463386at2"/>
<dbReference type="Proteomes" id="UP000001423">
    <property type="component" value="Chromosome"/>
</dbReference>
<dbReference type="GO" id="GO:0000428">
    <property type="term" value="C:DNA-directed RNA polymerase complex"/>
    <property type="evidence" value="ECO:0007669"/>
    <property type="project" value="UniProtKB-KW"/>
</dbReference>
<dbReference type="GO" id="GO:0003677">
    <property type="term" value="F:DNA binding"/>
    <property type="evidence" value="ECO:0007669"/>
    <property type="project" value="UniProtKB-UniRule"/>
</dbReference>
<dbReference type="GO" id="GO:0003899">
    <property type="term" value="F:DNA-directed RNA polymerase activity"/>
    <property type="evidence" value="ECO:0007669"/>
    <property type="project" value="UniProtKB-UniRule"/>
</dbReference>
<dbReference type="GO" id="GO:0006351">
    <property type="term" value="P:DNA-templated transcription"/>
    <property type="evidence" value="ECO:0007669"/>
    <property type="project" value="UniProtKB-UniRule"/>
</dbReference>
<dbReference type="HAMAP" id="MF_00366">
    <property type="entry name" value="RNApol_bact_RpoZ"/>
    <property type="match status" value="1"/>
</dbReference>
<dbReference type="InterPro" id="IPR003716">
    <property type="entry name" value="DNA-dir_RNA_pol_omega"/>
</dbReference>
<dbReference type="InterPro" id="IPR006110">
    <property type="entry name" value="Pol_omega/Rpo6/RPB6"/>
</dbReference>
<dbReference type="NCBIfam" id="NF001574">
    <property type="entry name" value="PRK00392.2-5"/>
    <property type="match status" value="1"/>
</dbReference>
<dbReference type="Pfam" id="PF01192">
    <property type="entry name" value="RNA_pol_Rpb6"/>
    <property type="match status" value="1"/>
</dbReference>
<accession>Q7V5U8</accession>